<accession>Q8WV60</accession>
<accession>B7Z5D0</accession>
<accession>B7Z8L7</accession>
<accession>E9PFV7</accession>
<accession>Q6IA65</accession>
<accession>Q9H9R0</accession>
<sequence>MVRDSMAAAFRPSNRVLLQALQILVYPGVGGSGSVSCRCPLGAKRYLLTDNVVKLKEFQQKKVAVACNLSGTKETYFRNLKKKLTQNKLILKGELITLLHLCESRDHVELAKNVIYRYHAENKNFTLGEYKFGPLFVRLCYELDLEESAVELMKDQHLRGFFSDSTSFNILMDMLFIKGKYKSALQVLIEMKNQDVKFTKDTYVLAFAICYKLNSPESFKICTTLREEALLKGEILSRRASCFAVALALNQNEMAKAVSIFSQIMNPESIACINLNIIIHIQSNMLENLIKTLKNAAEGNLSKFVKRHVFSEEVLAKVREKVKDVPALVAKFDEIYGTLHITGQVTTDSLDAVLCHTPRDRKSHTLLLNKRMVSRRTFQPLSQSLLAE</sequence>
<organism>
    <name type="scientific">Homo sapiens</name>
    <name type="common">Human</name>
    <dbReference type="NCBI Taxonomy" id="9606"/>
    <lineage>
        <taxon>Eukaryota</taxon>
        <taxon>Metazoa</taxon>
        <taxon>Chordata</taxon>
        <taxon>Craniata</taxon>
        <taxon>Vertebrata</taxon>
        <taxon>Euteleostomi</taxon>
        <taxon>Mammalia</taxon>
        <taxon>Eutheria</taxon>
        <taxon>Euarchontoglires</taxon>
        <taxon>Primates</taxon>
        <taxon>Haplorrhini</taxon>
        <taxon>Catarrhini</taxon>
        <taxon>Hominidae</taxon>
        <taxon>Homo</taxon>
    </lineage>
</organism>
<protein>
    <recommendedName>
        <fullName>Pentatricopeptide repeat-containing protein 2, mitochondrial</fullName>
    </recommendedName>
</protein>
<feature type="chain" id="PRO_0000344050" description="Pentatricopeptide repeat-containing protein 2, mitochondrial">
    <location>
        <begin position="1"/>
        <end position="388"/>
    </location>
</feature>
<feature type="repeat" description="PPR">
    <location>
        <begin position="166"/>
        <end position="200"/>
    </location>
</feature>
<feature type="modified residue" description="Phosphoserine" evidence="5">
    <location>
        <position position="382"/>
    </location>
</feature>
<feature type="splice variant" id="VSP_055257" description="In isoform 2." evidence="3">
    <original>MVRDSMAAAFR</original>
    <variation>MWNWLKMSFTG</variation>
    <location>
        <begin position="1"/>
        <end position="11"/>
    </location>
</feature>
<feature type="splice variant" id="VSP_055258" description="In isoform 2." evidence="3">
    <location>
        <begin position="12"/>
        <end position="183"/>
    </location>
</feature>
<feature type="splice variant" id="VSP_055680" description="In isoform 3." evidence="3">
    <original>KETYFRNLKKKLTQNKLILKGELITLLHLCESRDHVELAKNVIYRYHAENKNFTLGEYKFGPLFVRLCYELDLEESAVELMKDQHLRGFFSDSTSFNILMDMLFIKGKYKS</original>
    <variation>KG</variation>
    <location>
        <begin position="73"/>
        <end position="183"/>
    </location>
</feature>
<feature type="sequence conflict" description="In Ref. 1; BAH12866." evidence="4" ref="1">
    <original>S</original>
    <variation>P</variation>
    <location>
        <position position="34"/>
    </location>
</feature>
<feature type="sequence conflict" description="In Ref. 1; BAB14162." evidence="4" ref="1">
    <original>Q</original>
    <variation>L</variation>
    <location>
        <position position="194"/>
    </location>
</feature>
<feature type="sequence conflict" description="In Ref. 5; CAG33571." evidence="4" ref="5">
    <original>E</original>
    <variation>D</variation>
    <location>
        <position position="388"/>
    </location>
</feature>
<reference key="1">
    <citation type="journal article" date="2004" name="Nat. Genet.">
        <title>Complete sequencing and characterization of 21,243 full-length human cDNAs.</title>
        <authorList>
            <person name="Ota T."/>
            <person name="Suzuki Y."/>
            <person name="Nishikawa T."/>
            <person name="Otsuki T."/>
            <person name="Sugiyama T."/>
            <person name="Irie R."/>
            <person name="Wakamatsu A."/>
            <person name="Hayashi K."/>
            <person name="Sato H."/>
            <person name="Nagai K."/>
            <person name="Kimura K."/>
            <person name="Makita H."/>
            <person name="Sekine M."/>
            <person name="Obayashi M."/>
            <person name="Nishi T."/>
            <person name="Shibahara T."/>
            <person name="Tanaka T."/>
            <person name="Ishii S."/>
            <person name="Yamamoto J."/>
            <person name="Saito K."/>
            <person name="Kawai Y."/>
            <person name="Isono Y."/>
            <person name="Nakamura Y."/>
            <person name="Nagahari K."/>
            <person name="Murakami K."/>
            <person name="Yasuda T."/>
            <person name="Iwayanagi T."/>
            <person name="Wagatsuma M."/>
            <person name="Shiratori A."/>
            <person name="Sudo H."/>
            <person name="Hosoiri T."/>
            <person name="Kaku Y."/>
            <person name="Kodaira H."/>
            <person name="Kondo H."/>
            <person name="Sugawara M."/>
            <person name="Takahashi M."/>
            <person name="Kanda K."/>
            <person name="Yokoi T."/>
            <person name="Furuya T."/>
            <person name="Kikkawa E."/>
            <person name="Omura Y."/>
            <person name="Abe K."/>
            <person name="Kamihara K."/>
            <person name="Katsuta N."/>
            <person name="Sato K."/>
            <person name="Tanikawa M."/>
            <person name="Yamazaki M."/>
            <person name="Ninomiya K."/>
            <person name="Ishibashi T."/>
            <person name="Yamashita H."/>
            <person name="Murakawa K."/>
            <person name="Fujimori K."/>
            <person name="Tanai H."/>
            <person name="Kimata M."/>
            <person name="Watanabe M."/>
            <person name="Hiraoka S."/>
            <person name="Chiba Y."/>
            <person name="Ishida S."/>
            <person name="Ono Y."/>
            <person name="Takiguchi S."/>
            <person name="Watanabe S."/>
            <person name="Yosida M."/>
            <person name="Hotuta T."/>
            <person name="Kusano J."/>
            <person name="Kanehori K."/>
            <person name="Takahashi-Fujii A."/>
            <person name="Hara H."/>
            <person name="Tanase T.-O."/>
            <person name="Nomura Y."/>
            <person name="Togiya S."/>
            <person name="Komai F."/>
            <person name="Hara R."/>
            <person name="Takeuchi K."/>
            <person name="Arita M."/>
            <person name="Imose N."/>
            <person name="Musashino K."/>
            <person name="Yuuki H."/>
            <person name="Oshima A."/>
            <person name="Sasaki N."/>
            <person name="Aotsuka S."/>
            <person name="Yoshikawa Y."/>
            <person name="Matsunawa H."/>
            <person name="Ichihara T."/>
            <person name="Shiohata N."/>
            <person name="Sano S."/>
            <person name="Moriya S."/>
            <person name="Momiyama H."/>
            <person name="Satoh N."/>
            <person name="Takami S."/>
            <person name="Terashima Y."/>
            <person name="Suzuki O."/>
            <person name="Nakagawa S."/>
            <person name="Senoh A."/>
            <person name="Mizoguchi H."/>
            <person name="Goto Y."/>
            <person name="Shimizu F."/>
            <person name="Wakebe H."/>
            <person name="Hishigaki H."/>
            <person name="Watanabe T."/>
            <person name="Sugiyama A."/>
            <person name="Takemoto M."/>
            <person name="Kawakami B."/>
            <person name="Yamazaki M."/>
            <person name="Watanabe K."/>
            <person name="Kumagai A."/>
            <person name="Itakura S."/>
            <person name="Fukuzumi Y."/>
            <person name="Fujimori Y."/>
            <person name="Komiyama M."/>
            <person name="Tashiro H."/>
            <person name="Tanigami A."/>
            <person name="Fujiwara T."/>
            <person name="Ono T."/>
            <person name="Yamada K."/>
            <person name="Fujii Y."/>
            <person name="Ozaki K."/>
            <person name="Hirao M."/>
            <person name="Ohmori Y."/>
            <person name="Kawabata A."/>
            <person name="Hikiji T."/>
            <person name="Kobatake N."/>
            <person name="Inagaki H."/>
            <person name="Ikema Y."/>
            <person name="Okamoto S."/>
            <person name="Okitani R."/>
            <person name="Kawakami T."/>
            <person name="Noguchi S."/>
            <person name="Itoh T."/>
            <person name="Shigeta K."/>
            <person name="Senba T."/>
            <person name="Matsumura K."/>
            <person name="Nakajima Y."/>
            <person name="Mizuno T."/>
            <person name="Morinaga M."/>
            <person name="Sasaki M."/>
            <person name="Togashi T."/>
            <person name="Oyama M."/>
            <person name="Hata H."/>
            <person name="Watanabe M."/>
            <person name="Komatsu T."/>
            <person name="Mizushima-Sugano J."/>
            <person name="Satoh T."/>
            <person name="Shirai Y."/>
            <person name="Takahashi Y."/>
            <person name="Nakagawa K."/>
            <person name="Okumura K."/>
            <person name="Nagase T."/>
            <person name="Nomura N."/>
            <person name="Kikuchi H."/>
            <person name="Masuho Y."/>
            <person name="Yamashita R."/>
            <person name="Nakai K."/>
            <person name="Yada T."/>
            <person name="Nakamura Y."/>
            <person name="Ohara O."/>
            <person name="Isogai T."/>
            <person name="Sugano S."/>
        </authorList>
    </citation>
    <scope>NUCLEOTIDE SEQUENCE [LARGE SCALE MRNA] (ISOFORMS 2 AND 3)</scope>
    <scope>NUCLEOTIDE SEQUENCE [LARGE SCALE MRNA] OF 75-388 (ISOFORM 1)</scope>
</reference>
<reference key="2">
    <citation type="journal article" date="2004" name="Nature">
        <title>The DNA sequence and comparative analysis of human chromosome 5.</title>
        <authorList>
            <person name="Schmutz J."/>
            <person name="Martin J."/>
            <person name="Terry A."/>
            <person name="Couronne O."/>
            <person name="Grimwood J."/>
            <person name="Lowry S."/>
            <person name="Gordon L.A."/>
            <person name="Scott D."/>
            <person name="Xie G."/>
            <person name="Huang W."/>
            <person name="Hellsten U."/>
            <person name="Tran-Gyamfi M."/>
            <person name="She X."/>
            <person name="Prabhakar S."/>
            <person name="Aerts A."/>
            <person name="Altherr M."/>
            <person name="Bajorek E."/>
            <person name="Black S."/>
            <person name="Branscomb E."/>
            <person name="Caoile C."/>
            <person name="Challacombe J.F."/>
            <person name="Chan Y.M."/>
            <person name="Denys M."/>
            <person name="Detter J.C."/>
            <person name="Escobar J."/>
            <person name="Flowers D."/>
            <person name="Fotopulos D."/>
            <person name="Glavina T."/>
            <person name="Gomez M."/>
            <person name="Gonzales E."/>
            <person name="Goodstein D."/>
            <person name="Grigoriev I."/>
            <person name="Groza M."/>
            <person name="Hammon N."/>
            <person name="Hawkins T."/>
            <person name="Haydu L."/>
            <person name="Israni S."/>
            <person name="Jett J."/>
            <person name="Kadner K."/>
            <person name="Kimball H."/>
            <person name="Kobayashi A."/>
            <person name="Lopez F."/>
            <person name="Lou Y."/>
            <person name="Martinez D."/>
            <person name="Medina C."/>
            <person name="Morgan J."/>
            <person name="Nandkeshwar R."/>
            <person name="Noonan J.P."/>
            <person name="Pitluck S."/>
            <person name="Pollard M."/>
            <person name="Predki P."/>
            <person name="Priest J."/>
            <person name="Ramirez L."/>
            <person name="Retterer J."/>
            <person name="Rodriguez A."/>
            <person name="Rogers S."/>
            <person name="Salamov A."/>
            <person name="Salazar A."/>
            <person name="Thayer N."/>
            <person name="Tice H."/>
            <person name="Tsai M."/>
            <person name="Ustaszewska A."/>
            <person name="Vo N."/>
            <person name="Wheeler J."/>
            <person name="Wu K."/>
            <person name="Yang J."/>
            <person name="Dickson M."/>
            <person name="Cheng J.-F."/>
            <person name="Eichler E.E."/>
            <person name="Olsen A."/>
            <person name="Pennacchio L.A."/>
            <person name="Rokhsar D.S."/>
            <person name="Richardson P."/>
            <person name="Lucas S.M."/>
            <person name="Myers R.M."/>
            <person name="Rubin E.M."/>
        </authorList>
    </citation>
    <scope>NUCLEOTIDE SEQUENCE [LARGE SCALE GENOMIC DNA]</scope>
</reference>
<reference key="3">
    <citation type="submission" date="2005-07" db="EMBL/GenBank/DDBJ databases">
        <authorList>
            <person name="Mural R.J."/>
            <person name="Istrail S."/>
            <person name="Sutton G.G."/>
            <person name="Florea L."/>
            <person name="Halpern A.L."/>
            <person name="Mobarry C.M."/>
            <person name="Lippert R."/>
            <person name="Walenz B."/>
            <person name="Shatkay H."/>
            <person name="Dew I."/>
            <person name="Miller J.R."/>
            <person name="Flanigan M.J."/>
            <person name="Edwards N.J."/>
            <person name="Bolanos R."/>
            <person name="Fasulo D."/>
            <person name="Halldorsson B.V."/>
            <person name="Hannenhalli S."/>
            <person name="Turner R."/>
            <person name="Yooseph S."/>
            <person name="Lu F."/>
            <person name="Nusskern D.R."/>
            <person name="Shue B.C."/>
            <person name="Zheng X.H."/>
            <person name="Zhong F."/>
            <person name="Delcher A.L."/>
            <person name="Huson D.H."/>
            <person name="Kravitz S.A."/>
            <person name="Mouchard L."/>
            <person name="Reinert K."/>
            <person name="Remington K.A."/>
            <person name="Clark A.G."/>
            <person name="Waterman M.S."/>
            <person name="Eichler E.E."/>
            <person name="Adams M.D."/>
            <person name="Hunkapiller M.W."/>
            <person name="Myers E.W."/>
            <person name="Venter J.C."/>
        </authorList>
    </citation>
    <scope>NUCLEOTIDE SEQUENCE [LARGE SCALE GENOMIC DNA]</scope>
</reference>
<reference key="4">
    <citation type="journal article" date="2004" name="Genome Res.">
        <title>The status, quality, and expansion of the NIH full-length cDNA project: the Mammalian Gene Collection (MGC).</title>
        <authorList>
            <consortium name="The MGC Project Team"/>
        </authorList>
    </citation>
    <scope>NUCLEOTIDE SEQUENCE [LARGE SCALE MRNA] OF 4-388 (ISOFORM 1)</scope>
    <source>
        <tissue>Uterus</tissue>
    </source>
</reference>
<reference key="5">
    <citation type="submission" date="2004-06" db="EMBL/GenBank/DDBJ databases">
        <title>Cloning of human full open reading frames in Gateway(TM) system entry vector (pDONR201).</title>
        <authorList>
            <person name="Ebert L."/>
            <person name="Schick M."/>
            <person name="Neubert P."/>
            <person name="Schatten R."/>
            <person name="Henze S."/>
            <person name="Korn B."/>
        </authorList>
    </citation>
    <scope>NUCLEOTIDE SEQUENCE [LARGE SCALE MRNA] OF 153-388 (ISOFORM 1)</scope>
</reference>
<reference key="6">
    <citation type="journal article" date="2008" name="Biochem. J.">
        <title>Disruption of a mitochondrial RNA-binding protein gene results in decreased cytochrome b expression and a marked reduction in ubiquinol-cytochrome c reductase activity in mouse heart mitochondria.</title>
        <authorList>
            <person name="Xu F."/>
            <person name="Ackerley C."/>
            <person name="Maj M.C."/>
            <person name="Addis J.B."/>
            <person name="Levandovskiy V."/>
            <person name="Lee J."/>
            <person name="Mackay N."/>
            <person name="Cameron J.M."/>
            <person name="Robinson B.H."/>
        </authorList>
    </citation>
    <scope>SUBCELLULAR LOCATION</scope>
</reference>
<reference key="7">
    <citation type="journal article" date="2013" name="J. Proteome Res.">
        <title>Toward a comprehensive characterization of a human cancer cell phosphoproteome.</title>
        <authorList>
            <person name="Zhou H."/>
            <person name="Di Palma S."/>
            <person name="Preisinger C."/>
            <person name="Peng M."/>
            <person name="Polat A.N."/>
            <person name="Heck A.J."/>
            <person name="Mohammed S."/>
        </authorList>
    </citation>
    <scope>PHOSPHORYLATION [LARGE SCALE ANALYSIS] AT SER-382</scope>
    <scope>IDENTIFICATION BY MASS SPECTROMETRY [LARGE SCALE ANALYSIS]</scope>
    <source>
        <tissue>Erythroleukemia</tissue>
    </source>
</reference>
<name>PTCD2_HUMAN</name>
<evidence type="ECO:0000250" key="1"/>
<evidence type="ECO:0000269" key="2">
    <source>
    </source>
</evidence>
<evidence type="ECO:0000303" key="3">
    <source>
    </source>
</evidence>
<evidence type="ECO:0000305" key="4"/>
<evidence type="ECO:0007744" key="5">
    <source>
    </source>
</evidence>
<proteinExistence type="evidence at protein level"/>
<gene>
    <name type="primary">PTCD2</name>
</gene>
<keyword id="KW-0025">Alternative splicing</keyword>
<keyword id="KW-0496">Mitochondrion</keyword>
<keyword id="KW-0507">mRNA processing</keyword>
<keyword id="KW-0597">Phosphoprotein</keyword>
<keyword id="KW-1267">Proteomics identification</keyword>
<keyword id="KW-1185">Reference proteome</keyword>
<dbReference type="EMBL" id="AK022660">
    <property type="protein sequence ID" value="BAB14162.1"/>
    <property type="status" value="ALT_INIT"/>
    <property type="molecule type" value="mRNA"/>
</dbReference>
<dbReference type="EMBL" id="AK298750">
    <property type="protein sequence ID" value="BAH12866.1"/>
    <property type="molecule type" value="mRNA"/>
</dbReference>
<dbReference type="EMBL" id="AK303639">
    <property type="protein sequence ID" value="BAH14003.1"/>
    <property type="molecule type" value="mRNA"/>
</dbReference>
<dbReference type="EMBL" id="AC026406">
    <property type="status" value="NOT_ANNOTATED_CDS"/>
    <property type="molecule type" value="Genomic_DNA"/>
</dbReference>
<dbReference type="EMBL" id="CH471084">
    <property type="protein sequence ID" value="EAW95706.1"/>
    <property type="status" value="ALT_SEQ"/>
    <property type="molecule type" value="Genomic_DNA"/>
</dbReference>
<dbReference type="EMBL" id="BC018720">
    <property type="protein sequence ID" value="AAH18720.1"/>
    <property type="status" value="ALT_INIT"/>
    <property type="molecule type" value="mRNA"/>
</dbReference>
<dbReference type="EMBL" id="CR457290">
    <property type="protein sequence ID" value="CAG33571.1"/>
    <property type="molecule type" value="mRNA"/>
</dbReference>
<dbReference type="CCDS" id="CCDS4014.2">
    <molecule id="Q8WV60-1"/>
</dbReference>
<dbReference type="CCDS" id="CCDS68891.1">
    <molecule id="Q8WV60-3"/>
</dbReference>
<dbReference type="CCDS" id="CCDS68892.1">
    <molecule id="Q8WV60-2"/>
</dbReference>
<dbReference type="RefSeq" id="NP_001271332.1">
    <molecule id="Q8WV60-3"/>
    <property type="nucleotide sequence ID" value="NM_001284403.2"/>
</dbReference>
<dbReference type="RefSeq" id="NP_001271333.1">
    <molecule id="Q8WV60-2"/>
    <property type="nucleotide sequence ID" value="NM_001284404.2"/>
</dbReference>
<dbReference type="RefSeq" id="NP_079030.3">
    <molecule id="Q8WV60-1"/>
    <property type="nucleotide sequence ID" value="NM_024754.4"/>
</dbReference>
<dbReference type="RefSeq" id="XP_005248660.1">
    <property type="nucleotide sequence ID" value="XM_005248603.2"/>
</dbReference>
<dbReference type="SMR" id="Q8WV60"/>
<dbReference type="BioGRID" id="122905">
    <property type="interactions" value="39"/>
</dbReference>
<dbReference type="FunCoup" id="Q8WV60">
    <property type="interactions" value="1884"/>
</dbReference>
<dbReference type="IntAct" id="Q8WV60">
    <property type="interactions" value="25"/>
</dbReference>
<dbReference type="STRING" id="9606.ENSP00000370013"/>
<dbReference type="iPTMnet" id="Q8WV60"/>
<dbReference type="PhosphoSitePlus" id="Q8WV60"/>
<dbReference type="BioMuta" id="PTCD2"/>
<dbReference type="DMDM" id="215274210"/>
<dbReference type="jPOST" id="Q8WV60"/>
<dbReference type="MassIVE" id="Q8WV60"/>
<dbReference type="PaxDb" id="9606-ENSP00000370013"/>
<dbReference type="PeptideAtlas" id="Q8WV60"/>
<dbReference type="ProteomicsDB" id="20188"/>
<dbReference type="ProteomicsDB" id="6961"/>
<dbReference type="ProteomicsDB" id="74756">
    <molecule id="Q8WV60-1"/>
</dbReference>
<dbReference type="Pumba" id="Q8WV60"/>
<dbReference type="Antibodypedia" id="48592">
    <property type="antibodies" value="178 antibodies from 21 providers"/>
</dbReference>
<dbReference type="DNASU" id="79810"/>
<dbReference type="Ensembl" id="ENST00000308077.9">
    <molecule id="Q8WV60-1"/>
    <property type="protein sequence ID" value="ENSP00000308948.5"/>
    <property type="gene ID" value="ENSG00000049883.15"/>
</dbReference>
<dbReference type="Ensembl" id="ENST00000380639.10">
    <molecule id="Q8WV60-1"/>
    <property type="protein sequence ID" value="ENSP00000370013.4"/>
    <property type="gene ID" value="ENSG00000049883.15"/>
</dbReference>
<dbReference type="Ensembl" id="ENST00000503868.5">
    <molecule id="Q8WV60-3"/>
    <property type="protein sequence ID" value="ENSP00000427349.1"/>
    <property type="gene ID" value="ENSG00000049883.15"/>
</dbReference>
<dbReference type="Ensembl" id="ENST00000536805.5">
    <molecule id="Q8WV60-2"/>
    <property type="protein sequence ID" value="ENSP00000444772.1"/>
    <property type="gene ID" value="ENSG00000049883.15"/>
</dbReference>
<dbReference type="GeneID" id="79810"/>
<dbReference type="KEGG" id="hsa:79810"/>
<dbReference type="MANE-Select" id="ENST00000380639.10">
    <property type="protein sequence ID" value="ENSP00000370013.4"/>
    <property type="RefSeq nucleotide sequence ID" value="NM_024754.5"/>
    <property type="RefSeq protein sequence ID" value="NP_079030.3"/>
</dbReference>
<dbReference type="UCSC" id="uc003kcb.5">
    <molecule id="Q8WV60-1"/>
    <property type="organism name" value="human"/>
</dbReference>
<dbReference type="AGR" id="HGNC:25734"/>
<dbReference type="CTD" id="79810"/>
<dbReference type="DisGeNET" id="79810"/>
<dbReference type="GeneCards" id="PTCD2"/>
<dbReference type="HGNC" id="HGNC:25734">
    <property type="gene designation" value="PTCD2"/>
</dbReference>
<dbReference type="HPA" id="ENSG00000049883">
    <property type="expression patterns" value="Low tissue specificity"/>
</dbReference>
<dbReference type="MIM" id="615484">
    <property type="type" value="gene"/>
</dbReference>
<dbReference type="neXtProt" id="NX_Q8WV60"/>
<dbReference type="OpenTargets" id="ENSG00000049883"/>
<dbReference type="PharmGKB" id="PA134909110"/>
<dbReference type="VEuPathDB" id="HostDB:ENSG00000049883"/>
<dbReference type="eggNOG" id="ENOG502R1K6">
    <property type="taxonomic scope" value="Eukaryota"/>
</dbReference>
<dbReference type="GeneTree" id="ENSGT00390000009329"/>
<dbReference type="HOGENOM" id="CLU_060975_0_0_1"/>
<dbReference type="InParanoid" id="Q8WV60"/>
<dbReference type="OMA" id="KFYCSQI"/>
<dbReference type="OrthoDB" id="6073372at2759"/>
<dbReference type="PAN-GO" id="Q8WV60">
    <property type="GO annotations" value="4 GO annotations based on evolutionary models"/>
</dbReference>
<dbReference type="PhylomeDB" id="Q8WV60"/>
<dbReference type="TreeFam" id="TF324851"/>
<dbReference type="PathwayCommons" id="Q8WV60"/>
<dbReference type="SignaLink" id="Q8WV60"/>
<dbReference type="BioGRID-ORCS" id="79810">
    <property type="hits" value="19 hits in 1161 CRISPR screens"/>
</dbReference>
<dbReference type="CD-CODE" id="5965E019">
    <property type="entry name" value="mtRNA granule"/>
</dbReference>
<dbReference type="ChiTaRS" id="PTCD2">
    <property type="organism name" value="human"/>
</dbReference>
<dbReference type="GenomeRNAi" id="79810"/>
<dbReference type="Pharos" id="Q8WV60">
    <property type="development level" value="Tdark"/>
</dbReference>
<dbReference type="PRO" id="PR:Q8WV60"/>
<dbReference type="Proteomes" id="UP000005640">
    <property type="component" value="Chromosome 5"/>
</dbReference>
<dbReference type="RNAct" id="Q8WV60">
    <property type="molecule type" value="protein"/>
</dbReference>
<dbReference type="Bgee" id="ENSG00000049883">
    <property type="expression patterns" value="Expressed in biceps brachii and 161 other cell types or tissues"/>
</dbReference>
<dbReference type="ExpressionAtlas" id="Q8WV60">
    <property type="expression patterns" value="baseline and differential"/>
</dbReference>
<dbReference type="GO" id="GO:0005739">
    <property type="term" value="C:mitochondrion"/>
    <property type="evidence" value="ECO:0000314"/>
    <property type="project" value="UniProtKB"/>
</dbReference>
<dbReference type="GO" id="GO:0003723">
    <property type="term" value="F:RNA binding"/>
    <property type="evidence" value="ECO:0007005"/>
    <property type="project" value="UniProtKB"/>
</dbReference>
<dbReference type="GO" id="GO:0001822">
    <property type="term" value="P:kidney development"/>
    <property type="evidence" value="ECO:0007669"/>
    <property type="project" value="Ensembl"/>
</dbReference>
<dbReference type="GO" id="GO:0001889">
    <property type="term" value="P:liver development"/>
    <property type="evidence" value="ECO:0007669"/>
    <property type="project" value="Ensembl"/>
</dbReference>
<dbReference type="GO" id="GO:0007005">
    <property type="term" value="P:mitochondrion organization"/>
    <property type="evidence" value="ECO:0000318"/>
    <property type="project" value="GO_Central"/>
</dbReference>
<dbReference type="GO" id="GO:0006397">
    <property type="term" value="P:mRNA processing"/>
    <property type="evidence" value="ECO:0007669"/>
    <property type="project" value="UniProtKB-KW"/>
</dbReference>
<dbReference type="GO" id="GO:0055001">
    <property type="term" value="P:muscle cell development"/>
    <property type="evidence" value="ECO:0007669"/>
    <property type="project" value="Ensembl"/>
</dbReference>
<dbReference type="GO" id="GO:0010468">
    <property type="term" value="P:regulation of gene expression"/>
    <property type="evidence" value="ECO:0007669"/>
    <property type="project" value="Ensembl"/>
</dbReference>
<dbReference type="GO" id="GO:0050684">
    <property type="term" value="P:regulation of mRNA processing"/>
    <property type="evidence" value="ECO:0000250"/>
    <property type="project" value="UniProtKB"/>
</dbReference>
<dbReference type="GO" id="GO:0055010">
    <property type="term" value="P:ventricular cardiac muscle tissue morphogenesis"/>
    <property type="evidence" value="ECO:0007669"/>
    <property type="project" value="Ensembl"/>
</dbReference>
<dbReference type="FunFam" id="1.25.40.10:FF:001595">
    <property type="entry name" value="Pentatricopeptide repeat-containing protein 2, mitochondrial"/>
    <property type="match status" value="1"/>
</dbReference>
<dbReference type="Gene3D" id="1.25.40.10">
    <property type="entry name" value="Tetratricopeptide repeat domain"/>
    <property type="match status" value="1"/>
</dbReference>
<dbReference type="InterPro" id="IPR034913">
    <property type="entry name" value="mS27/PTCD2"/>
</dbReference>
<dbReference type="InterPro" id="IPR002885">
    <property type="entry name" value="Pentatricopeptide_rpt"/>
</dbReference>
<dbReference type="InterPro" id="IPR034629">
    <property type="entry name" value="PTCD2"/>
</dbReference>
<dbReference type="InterPro" id="IPR011990">
    <property type="entry name" value="TPR-like_helical_dom_sf"/>
</dbReference>
<dbReference type="PANTHER" id="PTHR14700">
    <property type="entry name" value="PENTATRICOPEPTIDE REPEAT-CONTAINING PROTEIN 2, MITOCHONDRIAL"/>
    <property type="match status" value="1"/>
</dbReference>
<dbReference type="PANTHER" id="PTHR14700:SF0">
    <property type="entry name" value="PENTATRICOPEPTIDE REPEAT-CONTAINING PROTEIN 2, MITOCHONDRIAL"/>
    <property type="match status" value="1"/>
</dbReference>
<dbReference type="Pfam" id="PF10037">
    <property type="entry name" value="MRP-S27"/>
    <property type="match status" value="1"/>
</dbReference>
<dbReference type="PROSITE" id="PS51375">
    <property type="entry name" value="PPR"/>
    <property type="match status" value="1"/>
</dbReference>
<comment type="function">
    <text evidence="1">Involved in mitochondrial RNA maturation and mitochondrial respiratory chain function.</text>
</comment>
<comment type="interaction">
    <interactant intactId="EBI-12154567">
        <id>Q8WV60</id>
    </interactant>
    <interactant intactId="EBI-2340316">
        <id>O15344</id>
        <label>MID1</label>
    </interactant>
    <organismsDiffer>false</organismsDiffer>
    <experiments>3</experiments>
</comment>
<comment type="interaction">
    <interactant intactId="EBI-12154567">
        <id>Q8WV60</id>
    </interactant>
    <interactant intactId="EBI-10172526">
        <id>Q9UJV3-2</id>
        <label>MID2</label>
    </interactant>
    <organismsDiffer>false</organismsDiffer>
    <experiments>3</experiments>
</comment>
<comment type="interaction">
    <interactant intactId="EBI-12154567">
        <id>Q8WV60</id>
    </interactant>
    <interactant intactId="EBI-742790">
        <id>Q13049</id>
        <label>TRIM32</label>
    </interactant>
    <organismsDiffer>false</organismsDiffer>
    <experiments>3</experiments>
</comment>
<comment type="interaction">
    <interactant intactId="EBI-12154567">
        <id>Q8WV60</id>
    </interactant>
    <interactant intactId="EBI-12133829">
        <id>Q70CQ1-2</id>
        <label>USP49</label>
    </interactant>
    <organismsDiffer>false</organismsDiffer>
    <experiments>3</experiments>
</comment>
<comment type="subcellular location">
    <subcellularLocation>
        <location evidence="2">Mitochondrion</location>
    </subcellularLocation>
</comment>
<comment type="alternative products">
    <event type="alternative splicing"/>
    <isoform>
        <id>Q8WV60-1</id>
        <name>1</name>
        <sequence type="displayed"/>
    </isoform>
    <isoform>
        <id>Q8WV60-2</id>
        <name>2</name>
        <sequence type="described" ref="VSP_055257 VSP_055258"/>
    </isoform>
    <isoform>
        <id>Q8WV60-3</id>
        <name>3</name>
        <sequence type="described" ref="VSP_055680"/>
    </isoform>
</comment>
<comment type="similarity">
    <text evidence="4">Belongs to the PTCD2 family.</text>
</comment>
<comment type="caution">
    <text evidence="4">It is uncertain whether Met-1 or Met-6 is the initiator.</text>
</comment>
<comment type="sequence caution" evidence="4">
    <conflict type="erroneous initiation">
        <sequence resource="EMBL-CDS" id="AAH18720"/>
    </conflict>
    <text>Truncated N-terminus.</text>
</comment>
<comment type="sequence caution" evidence="4">
    <conflict type="erroneous initiation">
        <sequence resource="EMBL-CDS" id="BAB14162"/>
    </conflict>
    <text>Truncated N-terminus.</text>
</comment>
<comment type="sequence caution" evidence="4">
    <conflict type="erroneous gene model prediction">
        <sequence resource="EMBL-CDS" id="EAW95706"/>
    </conflict>
</comment>